<feature type="chain" id="PRO_1000075457" description="S-ribosylhomocysteine lyase">
    <location>
        <begin position="1"/>
        <end position="171"/>
    </location>
</feature>
<feature type="binding site" evidence="1">
    <location>
        <position position="54"/>
    </location>
    <ligand>
        <name>Fe cation</name>
        <dbReference type="ChEBI" id="CHEBI:24875"/>
    </ligand>
</feature>
<feature type="binding site" evidence="1">
    <location>
        <position position="58"/>
    </location>
    <ligand>
        <name>Fe cation</name>
        <dbReference type="ChEBI" id="CHEBI:24875"/>
    </ligand>
</feature>
<feature type="binding site" evidence="1">
    <location>
        <position position="128"/>
    </location>
    <ligand>
        <name>Fe cation</name>
        <dbReference type="ChEBI" id="CHEBI:24875"/>
    </ligand>
</feature>
<reference key="1">
    <citation type="submission" date="2007-11" db="EMBL/GenBank/DDBJ databases">
        <authorList>
            <consortium name="The Salmonella enterica serovar Arizonae Genome Sequencing Project"/>
            <person name="McClelland M."/>
            <person name="Sanderson E.K."/>
            <person name="Porwollik S."/>
            <person name="Spieth J."/>
            <person name="Clifton W.S."/>
            <person name="Fulton R."/>
            <person name="Chunyan W."/>
            <person name="Wollam A."/>
            <person name="Shah N."/>
            <person name="Pepin K."/>
            <person name="Bhonagiri V."/>
            <person name="Nash W."/>
            <person name="Johnson M."/>
            <person name="Thiruvilangam P."/>
            <person name="Wilson R."/>
        </authorList>
    </citation>
    <scope>NUCLEOTIDE SEQUENCE [LARGE SCALE GENOMIC DNA]</scope>
    <source>
        <strain>ATCC BAA-731 / CDC346-86 / RSK2980</strain>
    </source>
</reference>
<sequence>MPLLDSFAVDHTRMQAPAVRVAKTMNTPHGDTITVFDLRFCVPNKEVMPEKGIHTLEHLFAGFMRDHLNGNGVEIIDISPMGCRTGFYMSLIGTPDEQRVADAWKAAMADVLKVQDQNQIPELNVYQCGTWQMHSLNEAQEIARHILDCDIRVNNNTELALPKEKLQELHI</sequence>
<accession>A9MFZ6</accession>
<keyword id="KW-0071">Autoinducer synthesis</keyword>
<keyword id="KW-0408">Iron</keyword>
<keyword id="KW-0456">Lyase</keyword>
<keyword id="KW-0479">Metal-binding</keyword>
<keyword id="KW-0673">Quorum sensing</keyword>
<keyword id="KW-1185">Reference proteome</keyword>
<name>LUXS_SALAR</name>
<dbReference type="EC" id="4.4.1.21" evidence="1"/>
<dbReference type="EMBL" id="CP000880">
    <property type="protein sequence ID" value="ABX20104.1"/>
    <property type="molecule type" value="Genomic_DNA"/>
</dbReference>
<dbReference type="SMR" id="A9MFZ6"/>
<dbReference type="STRING" id="41514.SARI_00157"/>
<dbReference type="KEGG" id="ses:SARI_00157"/>
<dbReference type="HOGENOM" id="CLU_107531_2_0_6"/>
<dbReference type="Proteomes" id="UP000002084">
    <property type="component" value="Chromosome"/>
</dbReference>
<dbReference type="GO" id="GO:0005506">
    <property type="term" value="F:iron ion binding"/>
    <property type="evidence" value="ECO:0007669"/>
    <property type="project" value="InterPro"/>
</dbReference>
<dbReference type="GO" id="GO:0043768">
    <property type="term" value="F:S-ribosylhomocysteine lyase activity"/>
    <property type="evidence" value="ECO:0007669"/>
    <property type="project" value="UniProtKB-UniRule"/>
</dbReference>
<dbReference type="GO" id="GO:0009372">
    <property type="term" value="P:quorum sensing"/>
    <property type="evidence" value="ECO:0007669"/>
    <property type="project" value="UniProtKB-UniRule"/>
</dbReference>
<dbReference type="FunFam" id="3.30.1360.80:FF:000001">
    <property type="entry name" value="S-ribosylhomocysteine lyase"/>
    <property type="match status" value="1"/>
</dbReference>
<dbReference type="Gene3D" id="3.30.1360.80">
    <property type="entry name" value="S-ribosylhomocysteinase (LuxS)"/>
    <property type="match status" value="1"/>
</dbReference>
<dbReference type="HAMAP" id="MF_00091">
    <property type="entry name" value="LuxS"/>
    <property type="match status" value="1"/>
</dbReference>
<dbReference type="InterPro" id="IPR037005">
    <property type="entry name" value="LuxS_sf"/>
</dbReference>
<dbReference type="InterPro" id="IPR011249">
    <property type="entry name" value="Metalloenz_LuxS/M16"/>
</dbReference>
<dbReference type="InterPro" id="IPR003815">
    <property type="entry name" value="S-ribosylhomocysteinase"/>
</dbReference>
<dbReference type="NCBIfam" id="NF002602">
    <property type="entry name" value="PRK02260.1-2"/>
    <property type="match status" value="1"/>
</dbReference>
<dbReference type="PANTHER" id="PTHR35799">
    <property type="entry name" value="S-RIBOSYLHOMOCYSTEINE LYASE"/>
    <property type="match status" value="1"/>
</dbReference>
<dbReference type="PANTHER" id="PTHR35799:SF1">
    <property type="entry name" value="S-RIBOSYLHOMOCYSTEINE LYASE"/>
    <property type="match status" value="1"/>
</dbReference>
<dbReference type="Pfam" id="PF02664">
    <property type="entry name" value="LuxS"/>
    <property type="match status" value="1"/>
</dbReference>
<dbReference type="PIRSF" id="PIRSF006160">
    <property type="entry name" value="AI2"/>
    <property type="match status" value="1"/>
</dbReference>
<dbReference type="PRINTS" id="PR01487">
    <property type="entry name" value="LUXSPROTEIN"/>
</dbReference>
<dbReference type="SUPFAM" id="SSF63411">
    <property type="entry name" value="LuxS/MPP-like metallohydrolase"/>
    <property type="match status" value="1"/>
</dbReference>
<comment type="function">
    <text evidence="1">Involved in the synthesis of autoinducer 2 (AI-2) which is secreted by bacteria and is used to communicate both the cell density and the metabolic potential of the environment. The regulation of gene expression in response to changes in cell density is called quorum sensing. Catalyzes the transformation of S-ribosylhomocysteine (RHC) to homocysteine (HC) and 4,5-dihydroxy-2,3-pentadione (DPD).</text>
</comment>
<comment type="catalytic activity">
    <reaction evidence="1">
        <text>S-(5-deoxy-D-ribos-5-yl)-L-homocysteine = (S)-4,5-dihydroxypentane-2,3-dione + L-homocysteine</text>
        <dbReference type="Rhea" id="RHEA:17753"/>
        <dbReference type="ChEBI" id="CHEBI:29484"/>
        <dbReference type="ChEBI" id="CHEBI:58195"/>
        <dbReference type="ChEBI" id="CHEBI:58199"/>
        <dbReference type="EC" id="4.4.1.21"/>
    </reaction>
</comment>
<comment type="cofactor">
    <cofactor evidence="1">
        <name>Fe cation</name>
        <dbReference type="ChEBI" id="CHEBI:24875"/>
    </cofactor>
    <text evidence="1">Binds 1 Fe cation per subunit.</text>
</comment>
<comment type="subunit">
    <text evidence="1">Homodimer.</text>
</comment>
<comment type="similarity">
    <text evidence="1">Belongs to the LuxS family.</text>
</comment>
<evidence type="ECO:0000255" key="1">
    <source>
        <dbReference type="HAMAP-Rule" id="MF_00091"/>
    </source>
</evidence>
<proteinExistence type="inferred from homology"/>
<gene>
    <name evidence="1" type="primary">luxS</name>
    <name type="ordered locus">SARI_00157</name>
</gene>
<organism>
    <name type="scientific">Salmonella arizonae (strain ATCC BAA-731 / CDC346-86 / RSK2980)</name>
    <dbReference type="NCBI Taxonomy" id="41514"/>
    <lineage>
        <taxon>Bacteria</taxon>
        <taxon>Pseudomonadati</taxon>
        <taxon>Pseudomonadota</taxon>
        <taxon>Gammaproteobacteria</taxon>
        <taxon>Enterobacterales</taxon>
        <taxon>Enterobacteriaceae</taxon>
        <taxon>Salmonella</taxon>
    </lineage>
</organism>
<protein>
    <recommendedName>
        <fullName evidence="1">S-ribosylhomocysteine lyase</fullName>
        <ecNumber evidence="1">4.4.1.21</ecNumber>
    </recommendedName>
    <alternativeName>
        <fullName evidence="1">AI-2 synthesis protein</fullName>
    </alternativeName>
    <alternativeName>
        <fullName evidence="1">Autoinducer-2 production protein LuxS</fullName>
    </alternativeName>
</protein>